<dbReference type="EC" id="1.2.1.70" evidence="1"/>
<dbReference type="EMBL" id="CP000050">
    <property type="protein sequence ID" value="AAY50406.1"/>
    <property type="molecule type" value="Genomic_DNA"/>
</dbReference>
<dbReference type="RefSeq" id="WP_011036104.1">
    <property type="nucleotide sequence ID" value="NZ_CP155948.1"/>
</dbReference>
<dbReference type="SMR" id="Q4URB7"/>
<dbReference type="KEGG" id="xcb:XC_3362"/>
<dbReference type="HOGENOM" id="CLU_035113_2_2_6"/>
<dbReference type="UniPathway" id="UPA00251">
    <property type="reaction ID" value="UER00316"/>
</dbReference>
<dbReference type="Proteomes" id="UP000000420">
    <property type="component" value="Chromosome"/>
</dbReference>
<dbReference type="GO" id="GO:0008883">
    <property type="term" value="F:glutamyl-tRNA reductase activity"/>
    <property type="evidence" value="ECO:0007669"/>
    <property type="project" value="UniProtKB-UniRule"/>
</dbReference>
<dbReference type="GO" id="GO:0050661">
    <property type="term" value="F:NADP binding"/>
    <property type="evidence" value="ECO:0007669"/>
    <property type="project" value="InterPro"/>
</dbReference>
<dbReference type="GO" id="GO:0019353">
    <property type="term" value="P:protoporphyrinogen IX biosynthetic process from glutamate"/>
    <property type="evidence" value="ECO:0007669"/>
    <property type="project" value="TreeGrafter"/>
</dbReference>
<dbReference type="CDD" id="cd05213">
    <property type="entry name" value="NAD_bind_Glutamyl_tRNA_reduct"/>
    <property type="match status" value="1"/>
</dbReference>
<dbReference type="FunFam" id="3.30.460.30:FF:000001">
    <property type="entry name" value="Glutamyl-tRNA reductase"/>
    <property type="match status" value="1"/>
</dbReference>
<dbReference type="FunFam" id="3.40.50.720:FF:000031">
    <property type="entry name" value="Glutamyl-tRNA reductase"/>
    <property type="match status" value="1"/>
</dbReference>
<dbReference type="Gene3D" id="3.30.460.30">
    <property type="entry name" value="Glutamyl-tRNA reductase, N-terminal domain"/>
    <property type="match status" value="1"/>
</dbReference>
<dbReference type="Gene3D" id="3.40.50.720">
    <property type="entry name" value="NAD(P)-binding Rossmann-like Domain"/>
    <property type="match status" value="1"/>
</dbReference>
<dbReference type="HAMAP" id="MF_00087">
    <property type="entry name" value="Glu_tRNA_reductase"/>
    <property type="match status" value="1"/>
</dbReference>
<dbReference type="InterPro" id="IPR000343">
    <property type="entry name" value="4pyrrol_synth_GluRdtase"/>
</dbReference>
<dbReference type="InterPro" id="IPR015896">
    <property type="entry name" value="4pyrrol_synth_GluRdtase_dimer"/>
</dbReference>
<dbReference type="InterPro" id="IPR015895">
    <property type="entry name" value="4pyrrol_synth_GluRdtase_N"/>
</dbReference>
<dbReference type="InterPro" id="IPR018214">
    <property type="entry name" value="GluRdtase_CS"/>
</dbReference>
<dbReference type="InterPro" id="IPR036453">
    <property type="entry name" value="GluRdtase_dimer_dom_sf"/>
</dbReference>
<dbReference type="InterPro" id="IPR036343">
    <property type="entry name" value="GluRdtase_N_sf"/>
</dbReference>
<dbReference type="InterPro" id="IPR036291">
    <property type="entry name" value="NAD(P)-bd_dom_sf"/>
</dbReference>
<dbReference type="InterPro" id="IPR006151">
    <property type="entry name" value="Shikm_DH/Glu-tRNA_Rdtase"/>
</dbReference>
<dbReference type="NCBIfam" id="TIGR01035">
    <property type="entry name" value="hemA"/>
    <property type="match status" value="1"/>
</dbReference>
<dbReference type="PANTHER" id="PTHR43013">
    <property type="entry name" value="GLUTAMYL-TRNA REDUCTASE"/>
    <property type="match status" value="1"/>
</dbReference>
<dbReference type="PANTHER" id="PTHR43013:SF1">
    <property type="entry name" value="GLUTAMYL-TRNA REDUCTASE"/>
    <property type="match status" value="1"/>
</dbReference>
<dbReference type="Pfam" id="PF00745">
    <property type="entry name" value="GlutR_dimer"/>
    <property type="match status" value="1"/>
</dbReference>
<dbReference type="Pfam" id="PF05201">
    <property type="entry name" value="GlutR_N"/>
    <property type="match status" value="1"/>
</dbReference>
<dbReference type="Pfam" id="PF01488">
    <property type="entry name" value="Shikimate_DH"/>
    <property type="match status" value="1"/>
</dbReference>
<dbReference type="PIRSF" id="PIRSF000445">
    <property type="entry name" value="4pyrrol_synth_GluRdtase"/>
    <property type="match status" value="1"/>
</dbReference>
<dbReference type="SUPFAM" id="SSF69742">
    <property type="entry name" value="Glutamyl tRNA-reductase catalytic, N-terminal domain"/>
    <property type="match status" value="1"/>
</dbReference>
<dbReference type="SUPFAM" id="SSF69075">
    <property type="entry name" value="Glutamyl tRNA-reductase dimerization domain"/>
    <property type="match status" value="1"/>
</dbReference>
<dbReference type="SUPFAM" id="SSF51735">
    <property type="entry name" value="NAD(P)-binding Rossmann-fold domains"/>
    <property type="match status" value="1"/>
</dbReference>
<dbReference type="PROSITE" id="PS00747">
    <property type="entry name" value="GLUTR"/>
    <property type="match status" value="1"/>
</dbReference>
<evidence type="ECO:0000255" key="1">
    <source>
        <dbReference type="HAMAP-Rule" id="MF_00087"/>
    </source>
</evidence>
<evidence type="ECO:0000256" key="2">
    <source>
        <dbReference type="SAM" id="MobiDB-lite"/>
    </source>
</evidence>
<name>HEM1_XANC8</name>
<comment type="function">
    <text evidence="1">Catalyzes the NADPH-dependent reduction of glutamyl-tRNA(Glu) to glutamate 1-semialdehyde (GSA).</text>
</comment>
<comment type="catalytic activity">
    <reaction evidence="1">
        <text>(S)-4-amino-5-oxopentanoate + tRNA(Glu) + NADP(+) = L-glutamyl-tRNA(Glu) + NADPH + H(+)</text>
        <dbReference type="Rhea" id="RHEA:12344"/>
        <dbReference type="Rhea" id="RHEA-COMP:9663"/>
        <dbReference type="Rhea" id="RHEA-COMP:9680"/>
        <dbReference type="ChEBI" id="CHEBI:15378"/>
        <dbReference type="ChEBI" id="CHEBI:57501"/>
        <dbReference type="ChEBI" id="CHEBI:57783"/>
        <dbReference type="ChEBI" id="CHEBI:58349"/>
        <dbReference type="ChEBI" id="CHEBI:78442"/>
        <dbReference type="ChEBI" id="CHEBI:78520"/>
        <dbReference type="EC" id="1.2.1.70"/>
    </reaction>
</comment>
<comment type="pathway">
    <text evidence="1">Porphyrin-containing compound metabolism; protoporphyrin-IX biosynthesis; 5-aminolevulinate from L-glutamyl-tRNA(Glu): step 1/2.</text>
</comment>
<comment type="subunit">
    <text evidence="1">Homodimer.</text>
</comment>
<comment type="domain">
    <text evidence="1">Possesses an unusual extended V-shaped dimeric structure with each monomer consisting of three distinct domains arranged along a curved 'spinal' alpha-helix. The N-terminal catalytic domain specifically recognizes the glutamate moiety of the substrate. The second domain is the NADPH-binding domain, and the third C-terminal domain is responsible for dimerization.</text>
</comment>
<comment type="miscellaneous">
    <text evidence="1">During catalysis, the active site Cys acts as a nucleophile attacking the alpha-carbonyl group of tRNA-bound glutamate with the formation of a thioester intermediate between enzyme and glutamate, and the concomitant release of tRNA(Glu). The thioester intermediate is finally reduced by direct hydride transfer from NADPH, to form the product GSA.</text>
</comment>
<comment type="similarity">
    <text evidence="1">Belongs to the glutamyl-tRNA reductase family.</text>
</comment>
<sequence>MTLWVLGLNHQTAPVDLRERAAFAGDALPRALDSLRILPQVREAALLSTCNRTELYAMADDPQTLVAWLDMHAPGLSGYLYQHRDAEAVRHLFRVATGLDSMVLGEPQILGQVKDAWAVARAHGALGSGLDRLFQQTFSVAKRARTDTRVGANPVSVASTAVRLAQESFARLNESTVLLVGAGETIELAAKHLSEGRVRRLLIANRTLAHAQTLATQHGGVALPLTELDRHLAEADVVFSATAAREPVVTRVQVEQALRTRKRKPMLLFDLAVPRDIEASVAELSDAYLYTVDDLERAVEDNRRSRREAADQAEAIIDLQVARYVETLQANERQAPLKRLRAFGDSTRDELLAKARQQLSNGKPADEVLEQLAHALTNRLLHPPTAALRDAALNNDLDLTSAADRLFPEKPGYRHPPVATPIVRTDDANPAP</sequence>
<reference key="1">
    <citation type="journal article" date="2005" name="Genome Res.">
        <title>Comparative and functional genomic analyses of the pathogenicity of phytopathogen Xanthomonas campestris pv. campestris.</title>
        <authorList>
            <person name="Qian W."/>
            <person name="Jia Y."/>
            <person name="Ren S.-X."/>
            <person name="He Y.-Q."/>
            <person name="Feng J.-X."/>
            <person name="Lu L.-F."/>
            <person name="Sun Q."/>
            <person name="Ying G."/>
            <person name="Tang D.-J."/>
            <person name="Tang H."/>
            <person name="Wu W."/>
            <person name="Hao P."/>
            <person name="Wang L."/>
            <person name="Jiang B.-L."/>
            <person name="Zeng S."/>
            <person name="Gu W.-Y."/>
            <person name="Lu G."/>
            <person name="Rong L."/>
            <person name="Tian Y."/>
            <person name="Yao Z."/>
            <person name="Fu G."/>
            <person name="Chen B."/>
            <person name="Fang R."/>
            <person name="Qiang B."/>
            <person name="Chen Z."/>
            <person name="Zhao G.-P."/>
            <person name="Tang J.-L."/>
            <person name="He C."/>
        </authorList>
    </citation>
    <scope>NUCLEOTIDE SEQUENCE [LARGE SCALE GENOMIC DNA]</scope>
    <source>
        <strain>8004</strain>
    </source>
</reference>
<protein>
    <recommendedName>
        <fullName evidence="1">Glutamyl-tRNA reductase</fullName>
        <shortName evidence="1">GluTR</shortName>
        <ecNumber evidence="1">1.2.1.70</ecNumber>
    </recommendedName>
</protein>
<gene>
    <name evidence="1" type="primary">hemA</name>
    <name type="ordered locus">XC_3362</name>
</gene>
<proteinExistence type="inferred from homology"/>
<keyword id="KW-0521">NADP</keyword>
<keyword id="KW-0560">Oxidoreductase</keyword>
<keyword id="KW-0627">Porphyrin biosynthesis</keyword>
<feature type="chain" id="PRO_1000004724" description="Glutamyl-tRNA reductase">
    <location>
        <begin position="1"/>
        <end position="432"/>
    </location>
</feature>
<feature type="region of interest" description="Disordered" evidence="2">
    <location>
        <begin position="408"/>
        <end position="432"/>
    </location>
</feature>
<feature type="active site" description="Nucleophile" evidence="1">
    <location>
        <position position="50"/>
    </location>
</feature>
<feature type="binding site" evidence="1">
    <location>
        <begin position="49"/>
        <end position="52"/>
    </location>
    <ligand>
        <name>substrate</name>
    </ligand>
</feature>
<feature type="binding site" evidence="1">
    <location>
        <position position="101"/>
    </location>
    <ligand>
        <name>substrate</name>
    </ligand>
</feature>
<feature type="binding site" evidence="1">
    <location>
        <begin position="106"/>
        <end position="108"/>
    </location>
    <ligand>
        <name>substrate</name>
    </ligand>
</feature>
<feature type="binding site" evidence="1">
    <location>
        <position position="112"/>
    </location>
    <ligand>
        <name>substrate</name>
    </ligand>
</feature>
<feature type="binding site" evidence="1">
    <location>
        <begin position="181"/>
        <end position="186"/>
    </location>
    <ligand>
        <name>NADP(+)</name>
        <dbReference type="ChEBI" id="CHEBI:58349"/>
    </ligand>
</feature>
<feature type="site" description="Important for activity" evidence="1">
    <location>
        <position position="91"/>
    </location>
</feature>
<accession>Q4URB7</accession>
<organism>
    <name type="scientific">Xanthomonas campestris pv. campestris (strain 8004)</name>
    <dbReference type="NCBI Taxonomy" id="314565"/>
    <lineage>
        <taxon>Bacteria</taxon>
        <taxon>Pseudomonadati</taxon>
        <taxon>Pseudomonadota</taxon>
        <taxon>Gammaproteobacteria</taxon>
        <taxon>Lysobacterales</taxon>
        <taxon>Lysobacteraceae</taxon>
        <taxon>Xanthomonas</taxon>
    </lineage>
</organism>